<evidence type="ECO:0000255" key="1">
    <source>
        <dbReference type="HAMAP-Rule" id="MF_00144"/>
    </source>
</evidence>
<feature type="chain" id="PRO_0000121688" description="tRNA-specific 2-thiouridylase MnmA">
    <location>
        <begin position="1"/>
        <end position="373"/>
    </location>
</feature>
<feature type="region of interest" description="Interaction with target base in tRNA" evidence="1">
    <location>
        <begin position="98"/>
        <end position="100"/>
    </location>
</feature>
<feature type="region of interest" description="Interaction with tRNA" evidence="1">
    <location>
        <begin position="150"/>
        <end position="152"/>
    </location>
</feature>
<feature type="region of interest" description="Interaction with tRNA" evidence="1">
    <location>
        <begin position="312"/>
        <end position="313"/>
    </location>
</feature>
<feature type="active site" description="Nucleophile" evidence="1">
    <location>
        <position position="103"/>
    </location>
</feature>
<feature type="active site" description="Cysteine persulfide intermediate" evidence="1">
    <location>
        <position position="200"/>
    </location>
</feature>
<feature type="binding site" evidence="1">
    <location>
        <begin position="12"/>
        <end position="19"/>
    </location>
    <ligand>
        <name>ATP</name>
        <dbReference type="ChEBI" id="CHEBI:30616"/>
    </ligand>
</feature>
<feature type="binding site" evidence="1">
    <location>
        <position position="38"/>
    </location>
    <ligand>
        <name>ATP</name>
        <dbReference type="ChEBI" id="CHEBI:30616"/>
    </ligand>
</feature>
<feature type="binding site" evidence="1">
    <location>
        <position position="127"/>
    </location>
    <ligand>
        <name>ATP</name>
        <dbReference type="ChEBI" id="CHEBI:30616"/>
    </ligand>
</feature>
<feature type="site" description="Interaction with tRNA" evidence="1">
    <location>
        <position position="128"/>
    </location>
</feature>
<feature type="site" description="Interaction with tRNA" evidence="1">
    <location>
        <position position="344"/>
    </location>
</feature>
<feature type="disulfide bond" description="Alternate" evidence="1">
    <location>
        <begin position="103"/>
        <end position="200"/>
    </location>
</feature>
<organism>
    <name type="scientific">Streptococcus pyogenes serotype M3 (strain ATCC BAA-595 / MGAS315)</name>
    <dbReference type="NCBI Taxonomy" id="198466"/>
    <lineage>
        <taxon>Bacteria</taxon>
        <taxon>Bacillati</taxon>
        <taxon>Bacillota</taxon>
        <taxon>Bacilli</taxon>
        <taxon>Lactobacillales</taxon>
        <taxon>Streptococcaceae</taxon>
        <taxon>Streptococcus</taxon>
    </lineage>
</organism>
<dbReference type="EC" id="2.8.1.13" evidence="1"/>
<dbReference type="EMBL" id="AE014074">
    <property type="protein sequence ID" value="AAM80447.1"/>
    <property type="molecule type" value="Genomic_DNA"/>
</dbReference>
<dbReference type="RefSeq" id="WP_011055107.1">
    <property type="nucleotide sequence ID" value="NC_004070.1"/>
</dbReference>
<dbReference type="SMR" id="P0DC34"/>
<dbReference type="KEGG" id="spg:SpyM3_1840"/>
<dbReference type="HOGENOM" id="CLU_035188_1_0_9"/>
<dbReference type="Proteomes" id="UP000000564">
    <property type="component" value="Chromosome"/>
</dbReference>
<dbReference type="GO" id="GO:0005737">
    <property type="term" value="C:cytoplasm"/>
    <property type="evidence" value="ECO:0007669"/>
    <property type="project" value="UniProtKB-SubCell"/>
</dbReference>
<dbReference type="GO" id="GO:0005524">
    <property type="term" value="F:ATP binding"/>
    <property type="evidence" value="ECO:0007669"/>
    <property type="project" value="UniProtKB-KW"/>
</dbReference>
<dbReference type="GO" id="GO:0000049">
    <property type="term" value="F:tRNA binding"/>
    <property type="evidence" value="ECO:0007669"/>
    <property type="project" value="UniProtKB-KW"/>
</dbReference>
<dbReference type="GO" id="GO:0103016">
    <property type="term" value="F:tRNA-uridine 2-sulfurtransferase activity"/>
    <property type="evidence" value="ECO:0007669"/>
    <property type="project" value="UniProtKB-EC"/>
</dbReference>
<dbReference type="GO" id="GO:0002143">
    <property type="term" value="P:tRNA wobble position uridine thiolation"/>
    <property type="evidence" value="ECO:0007669"/>
    <property type="project" value="TreeGrafter"/>
</dbReference>
<dbReference type="CDD" id="cd01998">
    <property type="entry name" value="MnmA_TRMU-like"/>
    <property type="match status" value="1"/>
</dbReference>
<dbReference type="FunFam" id="2.30.30.280:FF:000001">
    <property type="entry name" value="tRNA-specific 2-thiouridylase MnmA"/>
    <property type="match status" value="1"/>
</dbReference>
<dbReference type="FunFam" id="2.40.30.10:FF:000023">
    <property type="entry name" value="tRNA-specific 2-thiouridylase MnmA"/>
    <property type="match status" value="1"/>
</dbReference>
<dbReference type="FunFam" id="3.40.50.620:FF:000004">
    <property type="entry name" value="tRNA-specific 2-thiouridylase MnmA"/>
    <property type="match status" value="1"/>
</dbReference>
<dbReference type="Gene3D" id="2.30.30.280">
    <property type="entry name" value="Adenine nucleotide alpha hydrolases-like domains"/>
    <property type="match status" value="1"/>
</dbReference>
<dbReference type="Gene3D" id="3.40.50.620">
    <property type="entry name" value="HUPs"/>
    <property type="match status" value="1"/>
</dbReference>
<dbReference type="Gene3D" id="2.40.30.10">
    <property type="entry name" value="Translation factors"/>
    <property type="match status" value="1"/>
</dbReference>
<dbReference type="HAMAP" id="MF_00144">
    <property type="entry name" value="tRNA_thiouridyl_MnmA"/>
    <property type="match status" value="1"/>
</dbReference>
<dbReference type="InterPro" id="IPR004506">
    <property type="entry name" value="MnmA-like"/>
</dbReference>
<dbReference type="InterPro" id="IPR046885">
    <property type="entry name" value="MnmA-like_C"/>
</dbReference>
<dbReference type="InterPro" id="IPR046884">
    <property type="entry name" value="MnmA-like_central"/>
</dbReference>
<dbReference type="InterPro" id="IPR023382">
    <property type="entry name" value="MnmA-like_central_sf"/>
</dbReference>
<dbReference type="InterPro" id="IPR014729">
    <property type="entry name" value="Rossmann-like_a/b/a_fold"/>
</dbReference>
<dbReference type="NCBIfam" id="NF001138">
    <property type="entry name" value="PRK00143.1"/>
    <property type="match status" value="1"/>
</dbReference>
<dbReference type="NCBIfam" id="TIGR00420">
    <property type="entry name" value="trmU"/>
    <property type="match status" value="1"/>
</dbReference>
<dbReference type="PANTHER" id="PTHR11933:SF5">
    <property type="entry name" value="MITOCHONDRIAL TRNA-SPECIFIC 2-THIOURIDYLASE 1"/>
    <property type="match status" value="1"/>
</dbReference>
<dbReference type="PANTHER" id="PTHR11933">
    <property type="entry name" value="TRNA 5-METHYLAMINOMETHYL-2-THIOURIDYLATE -METHYLTRANSFERASE"/>
    <property type="match status" value="1"/>
</dbReference>
<dbReference type="Pfam" id="PF03054">
    <property type="entry name" value="tRNA_Me_trans"/>
    <property type="match status" value="1"/>
</dbReference>
<dbReference type="Pfam" id="PF20258">
    <property type="entry name" value="tRNA_Me_trans_C"/>
    <property type="match status" value="1"/>
</dbReference>
<dbReference type="Pfam" id="PF20259">
    <property type="entry name" value="tRNA_Me_trans_M"/>
    <property type="match status" value="1"/>
</dbReference>
<dbReference type="SUPFAM" id="SSF52402">
    <property type="entry name" value="Adenine nucleotide alpha hydrolases-like"/>
    <property type="match status" value="1"/>
</dbReference>
<sequence length="373" mass="41824">MTDNSKICVVVGMSGGVDSSVTALLLKEQGYDVIGVFMKNWHDTDEFGVCTATEDYKDVAAVADQIGIPYYSVNFEKEYWDRVFEYFLAEYRAGRTPNPDVMCNKEIKFKAFLDYAMTLGADYVATGHYAQVKRDENGTVHMLRGADNGKDQTYFLSQLSQEQLQKTLFPLGHLQKSEVREIAERAGLATAKKKDSTGICFIGEKNFKQFLSQYLPAQKGRMMTIDGRDMGEHAGLMYYTIGQRGGLGIGGQHGGDNQPWFVVGKDLSQNILYVGQGFYHEALMSNSLDASVIHFTREMPEEFTFECTAKFRYRQPDSHVRVHVRGDKAEVVFAEPQRAITPGQAVVFYDGKECLGGGMIDMAYKNGQPCQYI</sequence>
<comment type="function">
    <text evidence="1">Catalyzes the 2-thiolation of uridine at the wobble position (U34) of tRNA, leading to the formation of s(2)U34.</text>
</comment>
<comment type="catalytic activity">
    <reaction evidence="1">
        <text>S-sulfanyl-L-cysteinyl-[protein] + uridine(34) in tRNA + AH2 + ATP = 2-thiouridine(34) in tRNA + L-cysteinyl-[protein] + A + AMP + diphosphate + H(+)</text>
        <dbReference type="Rhea" id="RHEA:47032"/>
        <dbReference type="Rhea" id="RHEA-COMP:10131"/>
        <dbReference type="Rhea" id="RHEA-COMP:11726"/>
        <dbReference type="Rhea" id="RHEA-COMP:11727"/>
        <dbReference type="Rhea" id="RHEA-COMP:11728"/>
        <dbReference type="ChEBI" id="CHEBI:13193"/>
        <dbReference type="ChEBI" id="CHEBI:15378"/>
        <dbReference type="ChEBI" id="CHEBI:17499"/>
        <dbReference type="ChEBI" id="CHEBI:29950"/>
        <dbReference type="ChEBI" id="CHEBI:30616"/>
        <dbReference type="ChEBI" id="CHEBI:33019"/>
        <dbReference type="ChEBI" id="CHEBI:61963"/>
        <dbReference type="ChEBI" id="CHEBI:65315"/>
        <dbReference type="ChEBI" id="CHEBI:87170"/>
        <dbReference type="ChEBI" id="CHEBI:456215"/>
        <dbReference type="EC" id="2.8.1.13"/>
    </reaction>
</comment>
<comment type="subcellular location">
    <subcellularLocation>
        <location evidence="1">Cytoplasm</location>
    </subcellularLocation>
</comment>
<comment type="similarity">
    <text evidence="1">Belongs to the MnmA/TRMU family.</text>
</comment>
<keyword id="KW-0067">ATP-binding</keyword>
<keyword id="KW-0963">Cytoplasm</keyword>
<keyword id="KW-1015">Disulfide bond</keyword>
<keyword id="KW-0547">Nucleotide-binding</keyword>
<keyword id="KW-0694">RNA-binding</keyword>
<keyword id="KW-0808">Transferase</keyword>
<keyword id="KW-0819">tRNA processing</keyword>
<keyword id="KW-0820">tRNA-binding</keyword>
<protein>
    <recommendedName>
        <fullName evidence="1">tRNA-specific 2-thiouridylase MnmA</fullName>
        <ecNumber evidence="1">2.8.1.13</ecNumber>
    </recommendedName>
</protein>
<reference key="1">
    <citation type="journal article" date="2002" name="Proc. Natl. Acad. Sci. U.S.A.">
        <title>Genome sequence of a serotype M3 strain of group A Streptococcus: phage-encoded toxins, the high-virulence phenotype, and clone emergence.</title>
        <authorList>
            <person name="Beres S.B."/>
            <person name="Sylva G.L."/>
            <person name="Barbian K.D."/>
            <person name="Lei B."/>
            <person name="Hoff J.S."/>
            <person name="Mammarella N.D."/>
            <person name="Liu M.-Y."/>
            <person name="Smoot J.C."/>
            <person name="Porcella S.F."/>
            <person name="Parkins L.D."/>
            <person name="Campbell D.S."/>
            <person name="Smith T.M."/>
            <person name="McCormick J.K."/>
            <person name="Leung D.Y.M."/>
            <person name="Schlievert P.M."/>
            <person name="Musser J.M."/>
        </authorList>
    </citation>
    <scope>NUCLEOTIDE SEQUENCE [LARGE SCALE GENOMIC DNA]</scope>
    <source>
        <strain>ATCC BAA-595 / MGAS315</strain>
    </source>
</reference>
<gene>
    <name evidence="1" type="primary">mnmA</name>
    <name type="synonym">trmU</name>
    <name type="ordered locus">SpyM3_1840</name>
</gene>
<proteinExistence type="inferred from homology"/>
<accession>P0DC34</accession>
<accession>Q8K5H5</accession>
<name>MNMA_STRP3</name>